<name>MNMC_ACIBY</name>
<accession>B0V636</accession>
<feature type="chain" id="PRO_0000347935" description="tRNA 5-methylaminomethyl-2-thiouridine biosynthesis bifunctional protein MnmC">
    <location>
        <begin position="1"/>
        <end position="623"/>
    </location>
</feature>
<feature type="region of interest" description="tRNA (mnm(5)s(2)U34)-methyltransferase">
    <location>
        <begin position="1"/>
        <end position="244"/>
    </location>
</feature>
<feature type="region of interest" description="FAD-dependent cmnm(5)s(2)U34 oxidoreductase">
    <location>
        <begin position="270"/>
        <end position="623"/>
    </location>
</feature>
<sequence>MNKSNRIQTAELDWESIDGIEVPISKQFGDVYFSKDNGLLETRHVFLNGNDLSERLANLQDFEYFSVGETGFGTGLNILALWQLWQQVRPNNHSHLHAISVEKFPLSKADLIRALNVWDELKPLSKQLIEQYPLPLAGCHRLSFPEERFSIDLWLGDAQDIFPSMVKTKAVNAWFLDGFAPSCNPDMWEQNVLNNIVRLSNYGTTFASFSVAGVLKRGLKAHGIDISRPRGFGHKREMLKAIWKAPVSEEILFEPVSDTFHFTQQRIAIIGAGIAGLSTAWAFAQRGHQVTLFERTAPLSGASGNPLALLNPKLCPIEQSHEHLMTLSWQHALNFYKNFQAFRPIQIQQMALKNAQDLLDLTNQYPADIVTQQTSSLESDYPHIILTEAGAVSPHQLRDEILQHPGIELKIANITTLVSFENKVQLKSGNETTLEADHVVVCCARESAALFENYPLLKPIRGQVSWVDNSFATLPLHEAYSYGGYCMQLNTSELILGASFYPNRDDQEVLLDDHVHNFELIHSVFPHYAKQLPPVEQWQGRASVRAQSPDYFPVVGKMQNESRISTFAGLGSKGFLFAPLCSEVLVAQILGEAYPVPKSLLQKLDAQRFQKKVKPKKPYFKSQ</sequence>
<evidence type="ECO:0000255" key="1">
    <source>
        <dbReference type="HAMAP-Rule" id="MF_01102"/>
    </source>
</evidence>
<evidence type="ECO:0000305" key="2"/>
<gene>
    <name evidence="1" type="primary">mnmC</name>
    <name type="ordered locus">ABAYE0517</name>
</gene>
<organism>
    <name type="scientific">Acinetobacter baumannii (strain AYE)</name>
    <dbReference type="NCBI Taxonomy" id="509173"/>
    <lineage>
        <taxon>Bacteria</taxon>
        <taxon>Pseudomonadati</taxon>
        <taxon>Pseudomonadota</taxon>
        <taxon>Gammaproteobacteria</taxon>
        <taxon>Moraxellales</taxon>
        <taxon>Moraxellaceae</taxon>
        <taxon>Acinetobacter</taxon>
        <taxon>Acinetobacter calcoaceticus/baumannii complex</taxon>
    </lineage>
</organism>
<dbReference type="EC" id="2.1.1.61" evidence="1"/>
<dbReference type="EC" id="1.5.-.-" evidence="1"/>
<dbReference type="EMBL" id="CU459141">
    <property type="protein sequence ID" value="CAM85485.1"/>
    <property type="status" value="ALT_INIT"/>
    <property type="molecule type" value="Genomic_DNA"/>
</dbReference>
<dbReference type="RefSeq" id="WP_001043524.1">
    <property type="nucleotide sequence ID" value="NZ_JBDGFB010000017.1"/>
</dbReference>
<dbReference type="SMR" id="B0V636"/>
<dbReference type="EnsemblBacteria" id="CAM85485">
    <property type="protein sequence ID" value="CAM85485"/>
    <property type="gene ID" value="ABAYE0517"/>
</dbReference>
<dbReference type="KEGG" id="aby:ABAYE0517"/>
<dbReference type="HOGENOM" id="CLU_022427_2_0_6"/>
<dbReference type="GO" id="GO:0005737">
    <property type="term" value="C:cytoplasm"/>
    <property type="evidence" value="ECO:0007669"/>
    <property type="project" value="UniProtKB-SubCell"/>
</dbReference>
<dbReference type="GO" id="GO:0050660">
    <property type="term" value="F:flavin adenine dinucleotide binding"/>
    <property type="evidence" value="ECO:0007669"/>
    <property type="project" value="UniProtKB-UniRule"/>
</dbReference>
<dbReference type="GO" id="GO:0016645">
    <property type="term" value="F:oxidoreductase activity, acting on the CH-NH group of donors"/>
    <property type="evidence" value="ECO:0007669"/>
    <property type="project" value="InterPro"/>
</dbReference>
<dbReference type="GO" id="GO:0004808">
    <property type="term" value="F:tRNA (5-methylaminomethyl-2-thiouridylate)(34)-methyltransferase activity"/>
    <property type="evidence" value="ECO:0007669"/>
    <property type="project" value="UniProtKB-EC"/>
</dbReference>
<dbReference type="GO" id="GO:0032259">
    <property type="term" value="P:methylation"/>
    <property type="evidence" value="ECO:0007669"/>
    <property type="project" value="UniProtKB-KW"/>
</dbReference>
<dbReference type="GO" id="GO:0002097">
    <property type="term" value="P:tRNA wobble base modification"/>
    <property type="evidence" value="ECO:0007669"/>
    <property type="project" value="UniProtKB-UniRule"/>
</dbReference>
<dbReference type="Gene3D" id="3.30.9.10">
    <property type="entry name" value="D-Amino Acid Oxidase, subunit A, domain 2"/>
    <property type="match status" value="1"/>
</dbReference>
<dbReference type="Gene3D" id="3.50.50.60">
    <property type="entry name" value="FAD/NAD(P)-binding domain"/>
    <property type="match status" value="1"/>
</dbReference>
<dbReference type="Gene3D" id="3.40.50.150">
    <property type="entry name" value="Vaccinia Virus protein VP39"/>
    <property type="match status" value="1"/>
</dbReference>
<dbReference type="HAMAP" id="MF_01102">
    <property type="entry name" value="MnmC"/>
    <property type="match status" value="1"/>
</dbReference>
<dbReference type="InterPro" id="IPR006076">
    <property type="entry name" value="FAD-dep_OxRdtase"/>
</dbReference>
<dbReference type="InterPro" id="IPR036188">
    <property type="entry name" value="FAD/NAD-bd_sf"/>
</dbReference>
<dbReference type="InterPro" id="IPR008471">
    <property type="entry name" value="MnmC-like_methylTransf"/>
</dbReference>
<dbReference type="InterPro" id="IPR029063">
    <property type="entry name" value="SAM-dependent_MTases_sf"/>
</dbReference>
<dbReference type="InterPro" id="IPR023032">
    <property type="entry name" value="tRNA_MAMT_biosynth_bifunc_MnmC"/>
</dbReference>
<dbReference type="InterPro" id="IPR047785">
    <property type="entry name" value="tRNA_MNMC2"/>
</dbReference>
<dbReference type="InterPro" id="IPR017610">
    <property type="entry name" value="tRNA_S-uridine_synth_MnmC_C"/>
</dbReference>
<dbReference type="NCBIfam" id="TIGR03197">
    <property type="entry name" value="MnmC_Cterm"/>
    <property type="match status" value="1"/>
</dbReference>
<dbReference type="NCBIfam" id="NF033855">
    <property type="entry name" value="tRNA_MNMC2"/>
    <property type="match status" value="1"/>
</dbReference>
<dbReference type="PANTHER" id="PTHR13847">
    <property type="entry name" value="SARCOSINE DEHYDROGENASE-RELATED"/>
    <property type="match status" value="1"/>
</dbReference>
<dbReference type="PANTHER" id="PTHR13847:SF283">
    <property type="entry name" value="TRNA 5-METHYLAMINOMETHYL-2-THIOURIDINE BIOSYNTHESIS BIFUNCTIONAL PROTEIN MNMC"/>
    <property type="match status" value="1"/>
</dbReference>
<dbReference type="Pfam" id="PF01266">
    <property type="entry name" value="DAO"/>
    <property type="match status" value="1"/>
</dbReference>
<dbReference type="Pfam" id="PF05430">
    <property type="entry name" value="Methyltransf_30"/>
    <property type="match status" value="1"/>
</dbReference>
<dbReference type="SUPFAM" id="SSF54373">
    <property type="entry name" value="FAD-linked reductases, C-terminal domain"/>
    <property type="match status" value="1"/>
</dbReference>
<dbReference type="SUPFAM" id="SSF51971">
    <property type="entry name" value="Nucleotide-binding domain"/>
    <property type="match status" value="1"/>
</dbReference>
<proteinExistence type="inferred from homology"/>
<comment type="function">
    <text evidence="1">Catalyzes the last two steps in the biosynthesis of 5-methylaminomethyl-2-thiouridine (mnm(5)s(2)U) at the wobble position (U34) in tRNA. Catalyzes the FAD-dependent demodification of cmnm(5)s(2)U34 to nm(5)s(2)U34, followed by the transfer of a methyl group from S-adenosyl-L-methionine to nm(5)s(2)U34, to form mnm(5)s(2)U34.</text>
</comment>
<comment type="catalytic activity">
    <reaction evidence="1">
        <text>5-aminomethyl-2-thiouridine(34) in tRNA + S-adenosyl-L-methionine = 5-methylaminomethyl-2-thiouridine(34) in tRNA + S-adenosyl-L-homocysteine + H(+)</text>
        <dbReference type="Rhea" id="RHEA:19569"/>
        <dbReference type="Rhea" id="RHEA-COMP:10195"/>
        <dbReference type="Rhea" id="RHEA-COMP:10197"/>
        <dbReference type="ChEBI" id="CHEBI:15378"/>
        <dbReference type="ChEBI" id="CHEBI:57856"/>
        <dbReference type="ChEBI" id="CHEBI:59789"/>
        <dbReference type="ChEBI" id="CHEBI:74454"/>
        <dbReference type="ChEBI" id="CHEBI:74455"/>
        <dbReference type="EC" id="2.1.1.61"/>
    </reaction>
</comment>
<comment type="cofactor">
    <cofactor evidence="1">
        <name>FAD</name>
        <dbReference type="ChEBI" id="CHEBI:57692"/>
    </cofactor>
</comment>
<comment type="subcellular location">
    <subcellularLocation>
        <location evidence="1">Cytoplasm</location>
    </subcellularLocation>
</comment>
<comment type="similarity">
    <text evidence="1">In the N-terminal section; belongs to the methyltransferase superfamily. tRNA (mnm(5)s(2)U34)-methyltransferase family.</text>
</comment>
<comment type="similarity">
    <text evidence="1">In the C-terminal section; belongs to the DAO family.</text>
</comment>
<comment type="sequence caution" evidence="2">
    <conflict type="erroneous initiation">
        <sequence resource="EMBL-CDS" id="CAM85485"/>
    </conflict>
</comment>
<reference key="1">
    <citation type="journal article" date="2008" name="PLoS ONE">
        <title>Comparative analysis of Acinetobacters: three genomes for three lifestyles.</title>
        <authorList>
            <person name="Vallenet D."/>
            <person name="Nordmann P."/>
            <person name="Barbe V."/>
            <person name="Poirel L."/>
            <person name="Mangenot S."/>
            <person name="Bataille E."/>
            <person name="Dossat C."/>
            <person name="Gas S."/>
            <person name="Kreimeyer A."/>
            <person name="Lenoble P."/>
            <person name="Oztas S."/>
            <person name="Poulain J."/>
            <person name="Segurens B."/>
            <person name="Robert C."/>
            <person name="Abergel C."/>
            <person name="Claverie J.-M."/>
            <person name="Raoult D."/>
            <person name="Medigue C."/>
            <person name="Weissenbach J."/>
            <person name="Cruveiller S."/>
        </authorList>
    </citation>
    <scope>NUCLEOTIDE SEQUENCE [LARGE SCALE GENOMIC DNA]</scope>
    <source>
        <strain>AYE</strain>
    </source>
</reference>
<keyword id="KW-0963">Cytoplasm</keyword>
<keyword id="KW-0274">FAD</keyword>
<keyword id="KW-0285">Flavoprotein</keyword>
<keyword id="KW-0489">Methyltransferase</keyword>
<keyword id="KW-0511">Multifunctional enzyme</keyword>
<keyword id="KW-0560">Oxidoreductase</keyword>
<keyword id="KW-0949">S-adenosyl-L-methionine</keyword>
<keyword id="KW-0808">Transferase</keyword>
<keyword id="KW-0819">tRNA processing</keyword>
<protein>
    <recommendedName>
        <fullName evidence="1">tRNA 5-methylaminomethyl-2-thiouridine biosynthesis bifunctional protein MnmC</fullName>
        <shortName evidence="1">tRNA mnm(5)s(2)U biosynthesis bifunctional protein</shortName>
    </recommendedName>
    <domain>
        <recommendedName>
            <fullName evidence="1">tRNA (mnm(5)s(2)U34)-methyltransferase</fullName>
            <ecNumber evidence="1">2.1.1.61</ecNumber>
        </recommendedName>
    </domain>
    <domain>
        <recommendedName>
            <fullName evidence="1">FAD-dependent cmnm(5)s(2)U34 oxidoreductase</fullName>
            <ecNumber evidence="1">1.5.-.-</ecNumber>
        </recommendedName>
    </domain>
</protein>